<feature type="chain" id="PRO_0000365845" description="ATP synthase subunit c">
    <location>
        <begin position="1"/>
        <end position="72"/>
    </location>
</feature>
<feature type="transmembrane region" description="Helical" evidence="1">
    <location>
        <begin position="1"/>
        <end position="21"/>
    </location>
</feature>
<feature type="transmembrane region" description="Helical" evidence="1">
    <location>
        <begin position="49"/>
        <end position="69"/>
    </location>
</feature>
<feature type="site" description="Reversibly protonated during proton transport" evidence="1">
    <location>
        <position position="56"/>
    </location>
</feature>
<name>ATPL_BACCR</name>
<keyword id="KW-0066">ATP synthesis</keyword>
<keyword id="KW-1003">Cell membrane</keyword>
<keyword id="KW-0138">CF(0)</keyword>
<keyword id="KW-0375">Hydrogen ion transport</keyword>
<keyword id="KW-0406">Ion transport</keyword>
<keyword id="KW-0446">Lipid-binding</keyword>
<keyword id="KW-0472">Membrane</keyword>
<keyword id="KW-1185">Reference proteome</keyword>
<keyword id="KW-0812">Transmembrane</keyword>
<keyword id="KW-1133">Transmembrane helix</keyword>
<keyword id="KW-0813">Transport</keyword>
<reference key="1">
    <citation type="journal article" date="2003" name="Nature">
        <title>Genome sequence of Bacillus cereus and comparative analysis with Bacillus anthracis.</title>
        <authorList>
            <person name="Ivanova N."/>
            <person name="Sorokin A."/>
            <person name="Anderson I."/>
            <person name="Galleron N."/>
            <person name="Candelon B."/>
            <person name="Kapatral V."/>
            <person name="Bhattacharyya A."/>
            <person name="Reznik G."/>
            <person name="Mikhailova N."/>
            <person name="Lapidus A."/>
            <person name="Chu L."/>
            <person name="Mazur M."/>
            <person name="Goltsman E."/>
            <person name="Larsen N."/>
            <person name="D'Souza M."/>
            <person name="Walunas T."/>
            <person name="Grechkin Y."/>
            <person name="Pusch G."/>
            <person name="Haselkorn R."/>
            <person name="Fonstein M."/>
            <person name="Ehrlich S.D."/>
            <person name="Overbeek R."/>
            <person name="Kyrpides N.C."/>
        </authorList>
    </citation>
    <scope>NUCLEOTIDE SEQUENCE [LARGE SCALE GENOMIC DNA]</scope>
    <source>
        <strain>ATCC 14579 / DSM 31 / CCUG 7414 / JCM 2152 / NBRC 15305 / NCIMB 9373 / NCTC 2599 / NRRL B-3711</strain>
    </source>
</reference>
<comment type="function">
    <text evidence="1">F(1)F(0) ATP synthase produces ATP from ADP in the presence of a proton or sodium gradient. F-type ATPases consist of two structural domains, F(1) containing the extramembraneous catalytic core and F(0) containing the membrane proton channel, linked together by a central stalk and a peripheral stalk. During catalysis, ATP synthesis in the catalytic domain of F(1) is coupled via a rotary mechanism of the central stalk subunits to proton translocation.</text>
</comment>
<comment type="function">
    <text evidence="1">Key component of the F(0) channel; it plays a direct role in translocation across the membrane. A homomeric c-ring of between 10-14 subunits forms the central stalk rotor element with the F(1) delta and epsilon subunits.</text>
</comment>
<comment type="subunit">
    <text evidence="1">F-type ATPases have 2 components, F(1) - the catalytic core - and F(0) - the membrane proton channel. F(1) has five subunits: alpha(3), beta(3), gamma(1), delta(1), epsilon(1). F(0) has three main subunits: a(1), b(2) and c(10-14). The alpha and beta chains form an alternating ring which encloses part of the gamma chain. F(1) is attached to F(0) by a central stalk formed by the gamma and epsilon chains, while a peripheral stalk is formed by the delta and b chains.</text>
</comment>
<comment type="subcellular location">
    <subcellularLocation>
        <location evidence="1">Cell membrane</location>
        <topology evidence="1">Multi-pass membrane protein</topology>
    </subcellularLocation>
</comment>
<comment type="similarity">
    <text evidence="1">Belongs to the ATPase C chain family.</text>
</comment>
<proteinExistence type="inferred from homology"/>
<accession>Q814V7</accession>
<dbReference type="EMBL" id="AE016877">
    <property type="protein sequence ID" value="AAP12174.1"/>
    <property type="molecule type" value="Genomic_DNA"/>
</dbReference>
<dbReference type="RefSeq" id="NP_834973.1">
    <property type="nucleotide sequence ID" value="NC_004722.1"/>
</dbReference>
<dbReference type="RefSeq" id="WP_000052064.1">
    <property type="nucleotide sequence ID" value="NZ_CP138336.1"/>
</dbReference>
<dbReference type="SMR" id="Q814V7"/>
<dbReference type="STRING" id="226900.BC_5311"/>
<dbReference type="GeneID" id="93005813"/>
<dbReference type="KEGG" id="bce:BC5311"/>
<dbReference type="PATRIC" id="fig|226900.8.peg.5483"/>
<dbReference type="HOGENOM" id="CLU_148047_1_1_9"/>
<dbReference type="OrthoDB" id="2357540at2"/>
<dbReference type="PRO" id="PR:Q814V7"/>
<dbReference type="Proteomes" id="UP000001417">
    <property type="component" value="Chromosome"/>
</dbReference>
<dbReference type="GO" id="GO:0005886">
    <property type="term" value="C:plasma membrane"/>
    <property type="evidence" value="ECO:0007669"/>
    <property type="project" value="UniProtKB-SubCell"/>
</dbReference>
<dbReference type="GO" id="GO:0045259">
    <property type="term" value="C:proton-transporting ATP synthase complex"/>
    <property type="evidence" value="ECO:0007669"/>
    <property type="project" value="UniProtKB-KW"/>
</dbReference>
<dbReference type="GO" id="GO:0033177">
    <property type="term" value="C:proton-transporting two-sector ATPase complex, proton-transporting domain"/>
    <property type="evidence" value="ECO:0007669"/>
    <property type="project" value="InterPro"/>
</dbReference>
<dbReference type="GO" id="GO:0008289">
    <property type="term" value="F:lipid binding"/>
    <property type="evidence" value="ECO:0007669"/>
    <property type="project" value="UniProtKB-KW"/>
</dbReference>
<dbReference type="GO" id="GO:0046933">
    <property type="term" value="F:proton-transporting ATP synthase activity, rotational mechanism"/>
    <property type="evidence" value="ECO:0007669"/>
    <property type="project" value="UniProtKB-UniRule"/>
</dbReference>
<dbReference type="GO" id="GO:0015986">
    <property type="term" value="P:proton motive force-driven ATP synthesis"/>
    <property type="evidence" value="ECO:0000318"/>
    <property type="project" value="GO_Central"/>
</dbReference>
<dbReference type="CDD" id="cd18185">
    <property type="entry name" value="ATP-synt_Fo_c_ATPE"/>
    <property type="match status" value="1"/>
</dbReference>
<dbReference type="FunFam" id="1.20.20.10:FF:000004">
    <property type="entry name" value="ATP synthase subunit c"/>
    <property type="match status" value="1"/>
</dbReference>
<dbReference type="Gene3D" id="1.20.20.10">
    <property type="entry name" value="F1F0 ATP synthase subunit C"/>
    <property type="match status" value="1"/>
</dbReference>
<dbReference type="HAMAP" id="MF_01396">
    <property type="entry name" value="ATP_synth_c_bact"/>
    <property type="match status" value="1"/>
</dbReference>
<dbReference type="InterPro" id="IPR005953">
    <property type="entry name" value="ATP_synth_csu_bac/chlpt"/>
</dbReference>
<dbReference type="InterPro" id="IPR000454">
    <property type="entry name" value="ATP_synth_F0_csu"/>
</dbReference>
<dbReference type="InterPro" id="IPR020537">
    <property type="entry name" value="ATP_synth_F0_csu_DDCD_BS"/>
</dbReference>
<dbReference type="InterPro" id="IPR038662">
    <property type="entry name" value="ATP_synth_F0_csu_sf"/>
</dbReference>
<dbReference type="InterPro" id="IPR002379">
    <property type="entry name" value="ATPase_proteolipid_c-like_dom"/>
</dbReference>
<dbReference type="InterPro" id="IPR035921">
    <property type="entry name" value="F/V-ATP_Csub_sf"/>
</dbReference>
<dbReference type="NCBIfam" id="TIGR01260">
    <property type="entry name" value="ATP_synt_c"/>
    <property type="match status" value="1"/>
</dbReference>
<dbReference type="NCBIfam" id="NF005363">
    <property type="entry name" value="PRK06876.1"/>
    <property type="match status" value="1"/>
</dbReference>
<dbReference type="PANTHER" id="PTHR10031">
    <property type="entry name" value="ATP SYNTHASE LIPID-BINDING PROTEIN, MITOCHONDRIAL"/>
    <property type="match status" value="1"/>
</dbReference>
<dbReference type="PANTHER" id="PTHR10031:SF0">
    <property type="entry name" value="ATPASE PROTEIN 9"/>
    <property type="match status" value="1"/>
</dbReference>
<dbReference type="Pfam" id="PF00137">
    <property type="entry name" value="ATP-synt_C"/>
    <property type="match status" value="1"/>
</dbReference>
<dbReference type="PRINTS" id="PR00124">
    <property type="entry name" value="ATPASEC"/>
</dbReference>
<dbReference type="SUPFAM" id="SSF81333">
    <property type="entry name" value="F1F0 ATP synthase subunit C"/>
    <property type="match status" value="1"/>
</dbReference>
<dbReference type="PROSITE" id="PS00605">
    <property type="entry name" value="ATPASE_C"/>
    <property type="match status" value="1"/>
</dbReference>
<evidence type="ECO:0000255" key="1">
    <source>
        <dbReference type="HAMAP-Rule" id="MF_01396"/>
    </source>
</evidence>
<gene>
    <name evidence="1" type="primary">atpE</name>
    <name type="ordered locus">BC_5311</name>
</gene>
<sequence>MSLGVIAAAIAIGLSALGAGIGNGLIVSRTIEGVARQPELKGALQTIMFIGVALVEALPIIGVVIAFIVMNK</sequence>
<organism>
    <name type="scientific">Bacillus cereus (strain ATCC 14579 / DSM 31 / CCUG 7414 / JCM 2152 / NBRC 15305 / NCIMB 9373 / NCTC 2599 / NRRL B-3711)</name>
    <dbReference type="NCBI Taxonomy" id="226900"/>
    <lineage>
        <taxon>Bacteria</taxon>
        <taxon>Bacillati</taxon>
        <taxon>Bacillota</taxon>
        <taxon>Bacilli</taxon>
        <taxon>Bacillales</taxon>
        <taxon>Bacillaceae</taxon>
        <taxon>Bacillus</taxon>
        <taxon>Bacillus cereus group</taxon>
    </lineage>
</organism>
<protein>
    <recommendedName>
        <fullName evidence="1">ATP synthase subunit c</fullName>
    </recommendedName>
    <alternativeName>
        <fullName evidence="1">ATP synthase F(0) sector subunit c</fullName>
    </alternativeName>
    <alternativeName>
        <fullName evidence="1">F-type ATPase subunit c</fullName>
        <shortName evidence="1">F-ATPase subunit c</shortName>
    </alternativeName>
    <alternativeName>
        <fullName evidence="1">Lipid-binding protein</fullName>
    </alternativeName>
</protein>